<keyword id="KW-0066">ATP synthesis</keyword>
<keyword id="KW-0067">ATP-binding</keyword>
<keyword id="KW-0139">CF(1)</keyword>
<keyword id="KW-0375">Hydrogen ion transport</keyword>
<keyword id="KW-0406">Ion transport</keyword>
<keyword id="KW-0472">Membrane</keyword>
<keyword id="KW-0547">Nucleotide-binding</keyword>
<keyword id="KW-1185">Reference proteome</keyword>
<keyword id="KW-0793">Thylakoid</keyword>
<keyword id="KW-1278">Translocase</keyword>
<keyword id="KW-0813">Transport</keyword>
<sequence length="486" mass="52171">MVATPSTSSQTKGVVRQVIGPVLDVEFPAGKLPKILNALRIEAKNPAGQDIALTAEVQQLLGDHRVRAVAMSGTDGLVRGMEAIDTGAPISVPVGEATLGRIFNVLGEPVDEQGPVNTKDTAPIHRAAPKLTDLETKPKVFETGIKVIDLLAPYRQGGKVGLFGGAGVGKTVLIQELINNIAKEHGGVSVFGGVGERTREGNDLYEEFKESGVINADDLTQSKVALCFGQMNEPPGARMRVGLSALTMAEHFRDVNKQDVLLFVDNIFRFVQAGSEVSALLGRMPSAVGYQPTLGTDVGELQERITSTLEGSITSIQAVYVPADDLTDPAPATTFAHLDATTVLARALAAKGIYPAVDPLDSTSTMLQPSVVGDEHYKTARAVQSTLQRYKELQDIIAILGLDELSEEDRLTVDRARKIEKFLSQPFFVAEIFTGMSGKYVKLEDTIAGFNMILSGELDDLPEQAFYLVGNIDEVKAKAEKIKSEK</sequence>
<reference key="1">
    <citation type="journal article" date="2007" name="PLoS Genet.">
        <title>Patterns and implications of gene gain and loss in the evolution of Prochlorococcus.</title>
        <authorList>
            <person name="Kettler G.C."/>
            <person name="Martiny A.C."/>
            <person name="Huang K."/>
            <person name="Zucker J."/>
            <person name="Coleman M.L."/>
            <person name="Rodrigue S."/>
            <person name="Chen F."/>
            <person name="Lapidus A."/>
            <person name="Ferriera S."/>
            <person name="Johnson J."/>
            <person name="Steglich C."/>
            <person name="Church G.M."/>
            <person name="Richardson P."/>
            <person name="Chisholm S.W."/>
        </authorList>
    </citation>
    <scope>NUCLEOTIDE SEQUENCE [LARGE SCALE GENOMIC DNA]</scope>
    <source>
        <strain>MIT 9301</strain>
    </source>
</reference>
<comment type="function">
    <text evidence="1">Produces ATP from ADP in the presence of a proton gradient across the membrane. The catalytic sites are hosted primarily by the beta subunits.</text>
</comment>
<comment type="catalytic activity">
    <reaction evidence="1">
        <text>ATP + H2O + 4 H(+)(in) = ADP + phosphate + 5 H(+)(out)</text>
        <dbReference type="Rhea" id="RHEA:57720"/>
        <dbReference type="ChEBI" id="CHEBI:15377"/>
        <dbReference type="ChEBI" id="CHEBI:15378"/>
        <dbReference type="ChEBI" id="CHEBI:30616"/>
        <dbReference type="ChEBI" id="CHEBI:43474"/>
        <dbReference type="ChEBI" id="CHEBI:456216"/>
        <dbReference type="EC" id="7.1.2.2"/>
    </reaction>
</comment>
<comment type="subunit">
    <text evidence="1">F-type ATPases have 2 components, CF(1) - the catalytic core - and CF(0) - the membrane proton channel. CF(1) has five subunits: alpha(3), beta(3), gamma(1), delta(1), epsilon(1). CF(0) has four main subunits: a(1), b(1), b'(1) and c(9-12).</text>
</comment>
<comment type="subcellular location">
    <subcellularLocation>
        <location evidence="1">Cellular thylakoid membrane</location>
        <topology evidence="1">Peripheral membrane protein</topology>
    </subcellularLocation>
</comment>
<comment type="similarity">
    <text evidence="1">Belongs to the ATPase alpha/beta chains family.</text>
</comment>
<feature type="chain" id="PRO_1000055142" description="ATP synthase subunit beta">
    <location>
        <begin position="1"/>
        <end position="486"/>
    </location>
</feature>
<feature type="binding site" evidence="1">
    <location>
        <begin position="164"/>
        <end position="171"/>
    </location>
    <ligand>
        <name>ATP</name>
        <dbReference type="ChEBI" id="CHEBI:30616"/>
    </ligand>
</feature>
<proteinExistence type="inferred from homology"/>
<protein>
    <recommendedName>
        <fullName evidence="1">ATP synthase subunit beta</fullName>
        <ecNumber evidence="1">7.1.2.2</ecNumber>
    </recommendedName>
    <alternativeName>
        <fullName evidence="1">ATP synthase F1 sector subunit beta</fullName>
    </alternativeName>
    <alternativeName>
        <fullName evidence="1">F-ATPase subunit beta</fullName>
    </alternativeName>
</protein>
<name>ATPB_PROM0</name>
<evidence type="ECO:0000255" key="1">
    <source>
        <dbReference type="HAMAP-Rule" id="MF_01347"/>
    </source>
</evidence>
<organism>
    <name type="scientific">Prochlorococcus marinus (strain MIT 9301)</name>
    <dbReference type="NCBI Taxonomy" id="167546"/>
    <lineage>
        <taxon>Bacteria</taxon>
        <taxon>Bacillati</taxon>
        <taxon>Cyanobacteriota</taxon>
        <taxon>Cyanophyceae</taxon>
        <taxon>Synechococcales</taxon>
        <taxon>Prochlorococcaceae</taxon>
        <taxon>Prochlorococcus</taxon>
    </lineage>
</organism>
<gene>
    <name evidence="1" type="primary">atpD</name>
    <name evidence="1" type="synonym">atpB</name>
    <name type="ordered locus">P9301_16281</name>
</gene>
<accession>A3PES6</accession>
<dbReference type="EC" id="7.1.2.2" evidence="1"/>
<dbReference type="EMBL" id="CP000576">
    <property type="protein sequence ID" value="ABO18251.1"/>
    <property type="molecule type" value="Genomic_DNA"/>
</dbReference>
<dbReference type="RefSeq" id="WP_011863550.1">
    <property type="nucleotide sequence ID" value="NC_009091.1"/>
</dbReference>
<dbReference type="SMR" id="A3PES6"/>
<dbReference type="STRING" id="167546.P9301_16281"/>
<dbReference type="KEGG" id="pmg:P9301_16281"/>
<dbReference type="eggNOG" id="COG0055">
    <property type="taxonomic scope" value="Bacteria"/>
</dbReference>
<dbReference type="HOGENOM" id="CLU_022398_0_2_3"/>
<dbReference type="OrthoDB" id="9801639at2"/>
<dbReference type="Proteomes" id="UP000001430">
    <property type="component" value="Chromosome"/>
</dbReference>
<dbReference type="GO" id="GO:0031676">
    <property type="term" value="C:plasma membrane-derived thylakoid membrane"/>
    <property type="evidence" value="ECO:0007669"/>
    <property type="project" value="UniProtKB-SubCell"/>
</dbReference>
<dbReference type="GO" id="GO:0045259">
    <property type="term" value="C:proton-transporting ATP synthase complex"/>
    <property type="evidence" value="ECO:0007669"/>
    <property type="project" value="UniProtKB-KW"/>
</dbReference>
<dbReference type="GO" id="GO:0005524">
    <property type="term" value="F:ATP binding"/>
    <property type="evidence" value="ECO:0007669"/>
    <property type="project" value="UniProtKB-UniRule"/>
</dbReference>
<dbReference type="GO" id="GO:0016887">
    <property type="term" value="F:ATP hydrolysis activity"/>
    <property type="evidence" value="ECO:0007669"/>
    <property type="project" value="InterPro"/>
</dbReference>
<dbReference type="GO" id="GO:0046933">
    <property type="term" value="F:proton-transporting ATP synthase activity, rotational mechanism"/>
    <property type="evidence" value="ECO:0007669"/>
    <property type="project" value="UniProtKB-UniRule"/>
</dbReference>
<dbReference type="CDD" id="cd18110">
    <property type="entry name" value="ATP-synt_F1_beta_C"/>
    <property type="match status" value="1"/>
</dbReference>
<dbReference type="CDD" id="cd18115">
    <property type="entry name" value="ATP-synt_F1_beta_N"/>
    <property type="match status" value="1"/>
</dbReference>
<dbReference type="CDD" id="cd01133">
    <property type="entry name" value="F1-ATPase_beta_CD"/>
    <property type="match status" value="1"/>
</dbReference>
<dbReference type="FunFam" id="1.10.1140.10:FF:000001">
    <property type="entry name" value="ATP synthase subunit beta"/>
    <property type="match status" value="1"/>
</dbReference>
<dbReference type="FunFam" id="3.40.50.12240:FF:000006">
    <property type="entry name" value="ATP synthase subunit beta"/>
    <property type="match status" value="1"/>
</dbReference>
<dbReference type="FunFam" id="3.40.50.300:FF:000004">
    <property type="entry name" value="ATP synthase subunit beta"/>
    <property type="match status" value="1"/>
</dbReference>
<dbReference type="FunFam" id="2.40.10.170:FF:000002">
    <property type="entry name" value="ATP synthase subunit beta, chloroplastic"/>
    <property type="match status" value="1"/>
</dbReference>
<dbReference type="Gene3D" id="2.40.10.170">
    <property type="match status" value="1"/>
</dbReference>
<dbReference type="Gene3D" id="1.10.1140.10">
    <property type="entry name" value="Bovine Mitochondrial F1-atpase, Atp Synthase Beta Chain, Chain D, domain 3"/>
    <property type="match status" value="1"/>
</dbReference>
<dbReference type="Gene3D" id="3.40.50.300">
    <property type="entry name" value="P-loop containing nucleotide triphosphate hydrolases"/>
    <property type="match status" value="1"/>
</dbReference>
<dbReference type="HAMAP" id="MF_01347">
    <property type="entry name" value="ATP_synth_beta_bact"/>
    <property type="match status" value="1"/>
</dbReference>
<dbReference type="InterPro" id="IPR003593">
    <property type="entry name" value="AAA+_ATPase"/>
</dbReference>
<dbReference type="InterPro" id="IPR055190">
    <property type="entry name" value="ATP-synt_VA_C"/>
</dbReference>
<dbReference type="InterPro" id="IPR005722">
    <property type="entry name" value="ATP_synth_F1_bsu"/>
</dbReference>
<dbReference type="InterPro" id="IPR020003">
    <property type="entry name" value="ATPase_a/bsu_AS"/>
</dbReference>
<dbReference type="InterPro" id="IPR050053">
    <property type="entry name" value="ATPase_alpha/beta_chains"/>
</dbReference>
<dbReference type="InterPro" id="IPR004100">
    <property type="entry name" value="ATPase_F1/V1/A1_a/bsu_N"/>
</dbReference>
<dbReference type="InterPro" id="IPR036121">
    <property type="entry name" value="ATPase_F1/V1/A1_a/bsu_N_sf"/>
</dbReference>
<dbReference type="InterPro" id="IPR000194">
    <property type="entry name" value="ATPase_F1/V1/A1_a/bsu_nucl-bd"/>
</dbReference>
<dbReference type="InterPro" id="IPR024034">
    <property type="entry name" value="ATPase_F1/V1_b/a_C"/>
</dbReference>
<dbReference type="InterPro" id="IPR027417">
    <property type="entry name" value="P-loop_NTPase"/>
</dbReference>
<dbReference type="NCBIfam" id="TIGR01039">
    <property type="entry name" value="atpD"/>
    <property type="match status" value="1"/>
</dbReference>
<dbReference type="PANTHER" id="PTHR15184">
    <property type="entry name" value="ATP SYNTHASE"/>
    <property type="match status" value="1"/>
</dbReference>
<dbReference type="PANTHER" id="PTHR15184:SF71">
    <property type="entry name" value="ATP SYNTHASE SUBUNIT BETA, MITOCHONDRIAL"/>
    <property type="match status" value="1"/>
</dbReference>
<dbReference type="Pfam" id="PF00006">
    <property type="entry name" value="ATP-synt_ab"/>
    <property type="match status" value="1"/>
</dbReference>
<dbReference type="Pfam" id="PF02874">
    <property type="entry name" value="ATP-synt_ab_N"/>
    <property type="match status" value="1"/>
</dbReference>
<dbReference type="Pfam" id="PF22919">
    <property type="entry name" value="ATP-synt_VA_C"/>
    <property type="match status" value="1"/>
</dbReference>
<dbReference type="SMART" id="SM00382">
    <property type="entry name" value="AAA"/>
    <property type="match status" value="1"/>
</dbReference>
<dbReference type="SUPFAM" id="SSF47917">
    <property type="entry name" value="C-terminal domain of alpha and beta subunits of F1 ATP synthase"/>
    <property type="match status" value="1"/>
</dbReference>
<dbReference type="SUPFAM" id="SSF50615">
    <property type="entry name" value="N-terminal domain of alpha and beta subunits of F1 ATP synthase"/>
    <property type="match status" value="1"/>
</dbReference>
<dbReference type="SUPFAM" id="SSF52540">
    <property type="entry name" value="P-loop containing nucleoside triphosphate hydrolases"/>
    <property type="match status" value="1"/>
</dbReference>
<dbReference type="PROSITE" id="PS00152">
    <property type="entry name" value="ATPASE_ALPHA_BETA"/>
    <property type="match status" value="1"/>
</dbReference>